<organism>
    <name type="scientific">Haemophilus ducreyi (strain 35000HP / ATCC 700724)</name>
    <dbReference type="NCBI Taxonomy" id="233412"/>
    <lineage>
        <taxon>Bacteria</taxon>
        <taxon>Pseudomonadati</taxon>
        <taxon>Pseudomonadota</taxon>
        <taxon>Gammaproteobacteria</taxon>
        <taxon>Pasteurellales</taxon>
        <taxon>Pasteurellaceae</taxon>
        <taxon>Haemophilus</taxon>
    </lineage>
</organism>
<keyword id="KW-0067">ATP-binding</keyword>
<keyword id="KW-0997">Cell inner membrane</keyword>
<keyword id="KW-1003">Cell membrane</keyword>
<keyword id="KW-0201">Cytochrome c-type biogenesis</keyword>
<keyword id="KW-0472">Membrane</keyword>
<keyword id="KW-0547">Nucleotide-binding</keyword>
<keyword id="KW-1185">Reference proteome</keyword>
<keyword id="KW-1278">Translocase</keyword>
<keyword id="KW-0813">Transport</keyword>
<accession>Q7VN12</accession>
<name>CCMA_HAEDU</name>
<proteinExistence type="inferred from homology"/>
<dbReference type="EC" id="7.6.2.5" evidence="1"/>
<dbReference type="EMBL" id="AE017143">
    <property type="protein sequence ID" value="AAP95689.1"/>
    <property type="molecule type" value="Genomic_DNA"/>
</dbReference>
<dbReference type="RefSeq" id="WP_010944739.1">
    <property type="nucleotide sequence ID" value="NC_002940.2"/>
</dbReference>
<dbReference type="SMR" id="Q7VN12"/>
<dbReference type="STRING" id="233412.HD_0786"/>
<dbReference type="KEGG" id="hdu:HD_0786"/>
<dbReference type="eggNOG" id="COG4133">
    <property type="taxonomic scope" value="Bacteria"/>
</dbReference>
<dbReference type="HOGENOM" id="CLU_000604_1_2_6"/>
<dbReference type="OrthoDB" id="9800654at2"/>
<dbReference type="Proteomes" id="UP000001022">
    <property type="component" value="Chromosome"/>
</dbReference>
<dbReference type="GO" id="GO:0005886">
    <property type="term" value="C:plasma membrane"/>
    <property type="evidence" value="ECO:0007669"/>
    <property type="project" value="UniProtKB-SubCell"/>
</dbReference>
<dbReference type="GO" id="GO:0015439">
    <property type="term" value="F:ABC-type heme transporter activity"/>
    <property type="evidence" value="ECO:0007669"/>
    <property type="project" value="UniProtKB-EC"/>
</dbReference>
<dbReference type="GO" id="GO:0005524">
    <property type="term" value="F:ATP binding"/>
    <property type="evidence" value="ECO:0007669"/>
    <property type="project" value="UniProtKB-KW"/>
</dbReference>
<dbReference type="GO" id="GO:0016887">
    <property type="term" value="F:ATP hydrolysis activity"/>
    <property type="evidence" value="ECO:0007669"/>
    <property type="project" value="InterPro"/>
</dbReference>
<dbReference type="GO" id="GO:0017004">
    <property type="term" value="P:cytochrome complex assembly"/>
    <property type="evidence" value="ECO:0007669"/>
    <property type="project" value="UniProtKB-KW"/>
</dbReference>
<dbReference type="Gene3D" id="3.40.50.300">
    <property type="entry name" value="P-loop containing nucleotide triphosphate hydrolases"/>
    <property type="match status" value="1"/>
</dbReference>
<dbReference type="InterPro" id="IPR003439">
    <property type="entry name" value="ABC_transporter-like_ATP-bd"/>
</dbReference>
<dbReference type="InterPro" id="IPR017871">
    <property type="entry name" value="ABC_transporter-like_CS"/>
</dbReference>
<dbReference type="InterPro" id="IPR005895">
    <property type="entry name" value="ABC_transptr_haem_export_CcmA"/>
</dbReference>
<dbReference type="InterPro" id="IPR027417">
    <property type="entry name" value="P-loop_NTPase"/>
</dbReference>
<dbReference type="NCBIfam" id="TIGR01189">
    <property type="entry name" value="ccmA"/>
    <property type="match status" value="1"/>
</dbReference>
<dbReference type="NCBIfam" id="NF010061">
    <property type="entry name" value="PRK13538.1"/>
    <property type="match status" value="1"/>
</dbReference>
<dbReference type="PANTHER" id="PTHR43499">
    <property type="entry name" value="ABC TRANSPORTER I FAMILY MEMBER 1"/>
    <property type="match status" value="1"/>
</dbReference>
<dbReference type="PANTHER" id="PTHR43499:SF1">
    <property type="entry name" value="ABC TRANSPORTER I FAMILY MEMBER 1"/>
    <property type="match status" value="1"/>
</dbReference>
<dbReference type="Pfam" id="PF00005">
    <property type="entry name" value="ABC_tran"/>
    <property type="match status" value="1"/>
</dbReference>
<dbReference type="SUPFAM" id="SSF52540">
    <property type="entry name" value="P-loop containing nucleoside triphosphate hydrolases"/>
    <property type="match status" value="1"/>
</dbReference>
<dbReference type="PROSITE" id="PS00211">
    <property type="entry name" value="ABC_TRANSPORTER_1"/>
    <property type="match status" value="1"/>
</dbReference>
<dbReference type="PROSITE" id="PS50893">
    <property type="entry name" value="ABC_TRANSPORTER_2"/>
    <property type="match status" value="1"/>
</dbReference>
<dbReference type="PROSITE" id="PS51243">
    <property type="entry name" value="CCMA"/>
    <property type="match status" value="1"/>
</dbReference>
<gene>
    <name evidence="1" type="primary">ccmA</name>
    <name type="ordered locus">HD_0786</name>
</gene>
<reference key="1">
    <citation type="submission" date="2003-06" db="EMBL/GenBank/DDBJ databases">
        <title>The complete genome sequence of Haemophilus ducreyi.</title>
        <authorList>
            <person name="Munson R.S. Jr."/>
            <person name="Ray W.C."/>
            <person name="Mahairas G."/>
            <person name="Sabo P."/>
            <person name="Mungur R."/>
            <person name="Johnson L."/>
            <person name="Nguyen D."/>
            <person name="Wang J."/>
            <person name="Forst C."/>
            <person name="Hood L."/>
        </authorList>
    </citation>
    <scope>NUCLEOTIDE SEQUENCE [LARGE SCALE GENOMIC DNA]</scope>
    <source>
        <strain>35000HP / ATCC 700724</strain>
    </source>
</reference>
<protein>
    <recommendedName>
        <fullName evidence="1">Cytochrome c biogenesis ATP-binding export protein CcmA</fullName>
        <ecNumber evidence="1">7.6.2.5</ecNumber>
    </recommendedName>
    <alternativeName>
        <fullName evidence="1">Heme exporter protein A</fullName>
    </alternativeName>
</protein>
<sequence>MHLNQLVISHLACERGENRLFEGCHFSVSSGEWVQIEGHNGIGKTSLLRILAGLALPVAGEVLWNNLSIHKQRDEYYAELFYLGHYAGIKPELSAWENLRFYQKMQGLSLDDEALWFALDKVSLVERADLPCSYLSAGQQRRVALAKLWLTQQKLWILDEPFTAIDNHGVGDLIMHIERHCSLGGMAIFTSHQTVESNKVRTLSLDQFKL</sequence>
<comment type="function">
    <text evidence="1">Part of the ABC transporter complex CcmAB involved in the biogenesis of c-type cytochromes; once thought to export heme, this seems not to be the case, but its exact role is uncertain. Responsible for energy coupling to the transport system.</text>
</comment>
<comment type="catalytic activity">
    <reaction evidence="1">
        <text>heme b(in) + ATP + H2O = heme b(out) + ADP + phosphate + H(+)</text>
        <dbReference type="Rhea" id="RHEA:19261"/>
        <dbReference type="ChEBI" id="CHEBI:15377"/>
        <dbReference type="ChEBI" id="CHEBI:15378"/>
        <dbReference type="ChEBI" id="CHEBI:30616"/>
        <dbReference type="ChEBI" id="CHEBI:43474"/>
        <dbReference type="ChEBI" id="CHEBI:60344"/>
        <dbReference type="ChEBI" id="CHEBI:456216"/>
        <dbReference type="EC" id="7.6.2.5"/>
    </reaction>
</comment>
<comment type="subunit">
    <text evidence="1">The complex is composed of two ATP-binding proteins (CcmA) and two transmembrane proteins (CcmB).</text>
</comment>
<comment type="subcellular location">
    <subcellularLocation>
        <location evidence="1">Cell inner membrane</location>
        <topology evidence="1">Peripheral membrane protein</topology>
    </subcellularLocation>
</comment>
<comment type="similarity">
    <text evidence="1">Belongs to the ABC transporter superfamily. CcmA exporter (TC 3.A.1.107) family.</text>
</comment>
<evidence type="ECO:0000255" key="1">
    <source>
        <dbReference type="HAMAP-Rule" id="MF_01707"/>
    </source>
</evidence>
<feature type="chain" id="PRO_0000092181" description="Cytochrome c biogenesis ATP-binding export protein CcmA">
    <location>
        <begin position="1"/>
        <end position="210"/>
    </location>
</feature>
<feature type="domain" description="ABC transporter" evidence="1">
    <location>
        <begin position="1"/>
        <end position="208"/>
    </location>
</feature>
<feature type="binding site" evidence="1">
    <location>
        <begin position="38"/>
        <end position="45"/>
    </location>
    <ligand>
        <name>ATP</name>
        <dbReference type="ChEBI" id="CHEBI:30616"/>
    </ligand>
</feature>